<organism>
    <name type="scientific">Homo sapiens</name>
    <name type="common">Human</name>
    <dbReference type="NCBI Taxonomy" id="9606"/>
    <lineage>
        <taxon>Eukaryota</taxon>
        <taxon>Metazoa</taxon>
        <taxon>Chordata</taxon>
        <taxon>Craniata</taxon>
        <taxon>Vertebrata</taxon>
        <taxon>Euteleostomi</taxon>
        <taxon>Mammalia</taxon>
        <taxon>Eutheria</taxon>
        <taxon>Euarchontoglires</taxon>
        <taxon>Primates</taxon>
        <taxon>Haplorrhini</taxon>
        <taxon>Catarrhini</taxon>
        <taxon>Hominidae</taxon>
        <taxon>Homo</taxon>
    </lineage>
</organism>
<protein>
    <recommendedName>
        <fullName>4-hydroxyphenylpyruvate dioxygenase-like protein</fullName>
        <shortName>HPD-like protein</shortName>
        <shortName evidence="6">HPDL</shortName>
        <ecNumber evidence="5">1.13.11.46</ecNumber>
    </recommendedName>
    <alternativeName>
        <fullName>Glyoxalase domain-containing protein 1</fullName>
    </alternativeName>
</protein>
<accession>Q96IR7</accession>
<accession>B2R9B0</accession>
<gene>
    <name evidence="8" type="primary">HPDL</name>
    <name type="synonym">GLOXD1</name>
</gene>
<keyword id="KW-0223">Dioxygenase</keyword>
<keyword id="KW-0225">Disease variant</keyword>
<keyword id="KW-0890">Hereditary spastic paraplegia</keyword>
<keyword id="KW-0991">Intellectual disability</keyword>
<keyword id="KW-0408">Iron</keyword>
<keyword id="KW-0479">Metal-binding</keyword>
<keyword id="KW-0496">Mitochondrion</keyword>
<keyword id="KW-0523">Neurodegeneration</keyword>
<keyword id="KW-0560">Oxidoreductase</keyword>
<keyword id="KW-1267">Proteomics identification</keyword>
<keyword id="KW-1185">Reference proteome</keyword>
<keyword id="KW-0677">Repeat</keyword>
<feature type="chain" id="PRO_0000271119" description="4-hydroxyphenylpyruvate dioxygenase-like protein">
    <location>
        <begin position="1"/>
        <end position="371"/>
    </location>
</feature>
<feature type="domain" description="VOC 1" evidence="2">
    <location>
        <begin position="7"/>
        <end position="135"/>
    </location>
</feature>
<feature type="domain" description="VOC 2" evidence="2">
    <location>
        <begin position="160"/>
        <end position="328"/>
    </location>
</feature>
<feature type="binding site" evidence="1">
    <location>
        <position position="163"/>
    </location>
    <ligand>
        <name>Fe cation</name>
        <dbReference type="ChEBI" id="CHEBI:24875"/>
    </ligand>
</feature>
<feature type="binding site" evidence="1">
    <location>
        <position position="258"/>
    </location>
    <ligand>
        <name>Fe cation</name>
        <dbReference type="ChEBI" id="CHEBI:24875"/>
    </ligand>
</feature>
<feature type="binding site" evidence="1">
    <location>
        <position position="339"/>
    </location>
    <ligand>
        <name>Fe cation</name>
        <dbReference type="ChEBI" id="CHEBI:24875"/>
    </ligand>
</feature>
<feature type="sequence variant" id="VAR_085125" description="In SPG83; dbSNP:rs1391712320." evidence="3">
    <original>G</original>
    <variation>D</variation>
    <location>
        <position position="50"/>
    </location>
</feature>
<feature type="sequence variant" id="VAR_085126" description="In NEDSWMA; uncertain significance; decreased protein abundance; dbSNP:rs567130416." evidence="3">
    <original>W</original>
    <variation>R</variation>
    <location>
        <position position="157"/>
    </location>
</feature>
<feature type="sequence variant" id="VAR_085127" description="In NEDSWMA; uncertain significance; decreased protein abundance; dbSNP:rs1186696459." evidence="3">
    <original>C</original>
    <variation>Y</variation>
    <location>
        <position position="168"/>
    </location>
</feature>
<feature type="sequence variant" id="VAR_085523" description="In NEDSWMA; dbSNP:rs773333490." evidence="4">
    <original>L</original>
    <variation>P</variation>
    <location>
        <position position="176"/>
    </location>
</feature>
<feature type="sequence variant" id="VAR_085128" description="In NEDSWMA; uncertain significance; decreased protein abundance; dbSNP:rs1644253602." evidence="3">
    <original>W</original>
    <variation>C</variation>
    <location>
        <position position="179"/>
    </location>
</feature>
<feature type="sequence variant" id="VAR_085129" description="In NEDSWMA; uncertain significance; dbSNP:rs1297494568." evidence="3">
    <original>L</original>
    <variation>P</variation>
    <location>
        <position position="217"/>
    </location>
</feature>
<feature type="sequence variant" id="VAR_085130" description="In NEDSWMA; uncertain significance; dbSNP:rs757449403." evidence="3">
    <original>L</original>
    <variation>P</variation>
    <location>
        <position position="234"/>
    </location>
</feature>
<feature type="sequence variant" id="VAR_085131" description="In NEDSWMA." evidence="3">
    <location>
        <begin position="241"/>
        <end position="371"/>
    </location>
</feature>
<feature type="sequence variant" id="VAR_085132" description="In NEDSWMA; uncertain significance." evidence="3">
    <original>L</original>
    <variation>P</variation>
    <location>
        <position position="248"/>
    </location>
</feature>
<feature type="sequence variant" id="VAR_085133" description="In NEDSWMA; uncertain significance; dbSNP:rs1644259400." evidence="3">
    <original>H</original>
    <variation>Q</variation>
    <location>
        <position position="251"/>
    </location>
</feature>
<feature type="sequence variant" id="VAR_085134" description="In NEDSWMA; uncertain significance; dbSNP:rs758290491." evidence="3">
    <original>G</original>
    <variation>E</variation>
    <location>
        <position position="260"/>
    </location>
</feature>
<feature type="sequence variant" id="VAR_085135" description="In NEDSWMA; uncertain significance; dbSNP:rs769373772." evidence="3">
    <original>I</original>
    <variation>T</variation>
    <location>
        <position position="266"/>
    </location>
</feature>
<feature type="sequence variant" id="VAR_085136" description="In SPG83; uncertain significance; dbSNP:rs777360560." evidence="3">
    <original>Y</original>
    <variation>H</variation>
    <location>
        <position position="287"/>
    </location>
</feature>
<feature type="sequence variant" id="VAR_085137" description="In NEDSWMA; uncertain significance; decreased protein abundance." evidence="3">
    <location>
        <begin position="342"/>
        <end position="371"/>
    </location>
</feature>
<feature type="mutagenesis site" description="Loss of 4-HPPA dioxygenase activity. Impaired cell 3D growth." evidence="5">
    <original>H</original>
    <variation>A</variation>
    <location>
        <position position="258"/>
    </location>
</feature>
<comment type="function">
    <text evidence="5">Iron-dependent dioxygenase that catalyzes the conversion of 4-hydroxyphenylpyruvate (4-HPPA) to 4-hydroxymandelate (4-HMA) in the mitochondria, one of the steps in the biosynthesis of coenzyme Q10 from tyrosine.</text>
</comment>
<comment type="catalytic activity">
    <reaction evidence="5">
        <text>3-(4-hydroxyphenyl)pyruvate + O2 = (S)-4-hydroxymandelate + CO2</text>
        <dbReference type="Rhea" id="RHEA:21376"/>
        <dbReference type="ChEBI" id="CHEBI:15379"/>
        <dbReference type="ChEBI" id="CHEBI:16526"/>
        <dbReference type="ChEBI" id="CHEBI:17210"/>
        <dbReference type="ChEBI" id="CHEBI:36242"/>
        <dbReference type="EC" id="1.13.11.46"/>
    </reaction>
    <physiologicalReaction direction="left-to-right" evidence="6">
        <dbReference type="Rhea" id="RHEA:21377"/>
    </physiologicalReaction>
</comment>
<comment type="cofactor">
    <cofactor evidence="1">
        <name>Fe cation</name>
        <dbReference type="ChEBI" id="CHEBI:24875"/>
    </cofactor>
    <text evidence="1">Binds 1 Fe cation per subunit.</text>
</comment>
<comment type="subcellular location">
    <subcellularLocation>
        <location evidence="3 5">Mitochondrion</location>
    </subcellularLocation>
</comment>
<comment type="disease" evidence="3 4">
    <disease id="DI-05922">
        <name>Neurodevelopmental disorder with progressive spasticity and brain white matter abnormalities</name>
        <acronym>NEDSWMA</acronym>
        <description>An autosomal recessive neurodevelopmental disorder characterized by developmental delay manifesting in infancy, inability to walk independently, mild to severe intellectual disability, poor overall growth, progressive microcephaly, and axial hypotonia. Additional variable features include brainstem and cerebellar involvement, seizures, joint contractures, ocular disturbances, episodic respiratory failure, and facial dysmorphism.</description>
        <dbReference type="MIM" id="619026"/>
    </disease>
    <text>The disease may be caused by variants affecting the gene represented in this entry.</text>
</comment>
<comment type="disease" evidence="3">
    <disease id="DI-05923">
        <name>Spastic paraplegia 83, autosomal recessive</name>
        <acronym>SPG83</acronym>
        <description>A form of spastic paraplegia, a neurodegenerative disorder characterized by a slow, gradual, progressive weakness and spasticity of the lower limbs. Rate of progression and the severity of symptoms are quite variable. Initial symptoms may include difficulty with balance, weakness and stiffness in the legs, muscle spasms, and dragging the toes when walking. In some forms of the disorder, bladder symptoms (such as incontinence) may appear, or the weakness and stiffness may spread to other parts of the body. SPG83 is characterized by juvenile onset of progressive lower limb spasticity resulting in gait instability.</description>
        <dbReference type="MIM" id="619027"/>
    </disease>
    <text>The disease is caused by variants affecting the gene represented in this entry.</text>
</comment>
<comment type="similarity">
    <text evidence="7">Belongs to the 4HPPD family.</text>
</comment>
<proteinExistence type="evidence at protein level"/>
<dbReference type="EC" id="1.13.11.46" evidence="5"/>
<dbReference type="EMBL" id="AK313714">
    <property type="protein sequence ID" value="BAG36457.1"/>
    <property type="molecule type" value="mRNA"/>
</dbReference>
<dbReference type="EMBL" id="AL359540">
    <property type="status" value="NOT_ANNOTATED_CDS"/>
    <property type="molecule type" value="Genomic_DNA"/>
</dbReference>
<dbReference type="EMBL" id="CH471059">
    <property type="protein sequence ID" value="EAX07002.1"/>
    <property type="molecule type" value="Genomic_DNA"/>
</dbReference>
<dbReference type="EMBL" id="BC007293">
    <property type="protein sequence ID" value="AAH07293.1"/>
    <property type="molecule type" value="mRNA"/>
</dbReference>
<dbReference type="CCDS" id="CCDS519.1"/>
<dbReference type="RefSeq" id="NP_116145.1">
    <property type="nucleotide sequence ID" value="NM_032756.4"/>
</dbReference>
<dbReference type="SMR" id="Q96IR7"/>
<dbReference type="BioGRID" id="124294">
    <property type="interactions" value="16"/>
</dbReference>
<dbReference type="FunCoup" id="Q96IR7">
    <property type="interactions" value="353"/>
</dbReference>
<dbReference type="IntAct" id="Q96IR7">
    <property type="interactions" value="3"/>
</dbReference>
<dbReference type="STRING" id="9606.ENSP00000335060"/>
<dbReference type="GlyGen" id="Q96IR7">
    <property type="glycosylation" value="1 site, 1 O-linked glycan (1 site)"/>
</dbReference>
<dbReference type="iPTMnet" id="Q96IR7"/>
<dbReference type="PhosphoSitePlus" id="Q96IR7"/>
<dbReference type="SwissPalm" id="Q96IR7"/>
<dbReference type="BioMuta" id="HPDL"/>
<dbReference type="DMDM" id="74751942"/>
<dbReference type="jPOST" id="Q96IR7"/>
<dbReference type="MassIVE" id="Q96IR7"/>
<dbReference type="PaxDb" id="9606-ENSP00000335060"/>
<dbReference type="PeptideAtlas" id="Q96IR7"/>
<dbReference type="ProteomicsDB" id="76848"/>
<dbReference type="Pumba" id="Q96IR7"/>
<dbReference type="Antibodypedia" id="32602">
    <property type="antibodies" value="46 antibodies from 18 providers"/>
</dbReference>
<dbReference type="DNASU" id="84842"/>
<dbReference type="Ensembl" id="ENST00000334815.6">
    <property type="protein sequence ID" value="ENSP00000335060.3"/>
    <property type="gene ID" value="ENSG00000186603.7"/>
</dbReference>
<dbReference type="GeneID" id="84842"/>
<dbReference type="KEGG" id="hsa:84842"/>
<dbReference type="MANE-Select" id="ENST00000334815.6">
    <property type="protein sequence ID" value="ENSP00000335060.3"/>
    <property type="RefSeq nucleotide sequence ID" value="NM_032756.4"/>
    <property type="RefSeq protein sequence ID" value="NP_116145.1"/>
</dbReference>
<dbReference type="UCSC" id="uc001cne.4">
    <property type="organism name" value="human"/>
</dbReference>
<dbReference type="AGR" id="HGNC:28242"/>
<dbReference type="CTD" id="84842"/>
<dbReference type="DisGeNET" id="84842"/>
<dbReference type="GeneCards" id="HPDL"/>
<dbReference type="HGNC" id="HGNC:28242">
    <property type="gene designation" value="HPDL"/>
</dbReference>
<dbReference type="HPA" id="ENSG00000186603">
    <property type="expression patterns" value="Tissue enhanced (brain)"/>
</dbReference>
<dbReference type="MalaCards" id="HPDL"/>
<dbReference type="MIM" id="618994">
    <property type="type" value="gene"/>
</dbReference>
<dbReference type="MIM" id="619026">
    <property type="type" value="phenotype"/>
</dbReference>
<dbReference type="MIM" id="619027">
    <property type="type" value="phenotype"/>
</dbReference>
<dbReference type="neXtProt" id="NX_Q96IR7"/>
<dbReference type="OpenTargets" id="ENSG00000186603"/>
<dbReference type="Orphanet" id="631076">
    <property type="disease" value="Autosomal recessive spastic paraplegia type 83"/>
</dbReference>
<dbReference type="Orphanet" id="641353">
    <property type="disease" value="Infantile neurodegeneration-progressive spasticity-intellectual disability-white matter lesions syndrome"/>
</dbReference>
<dbReference type="Orphanet" id="528084">
    <property type="disease" value="Non-specific syndromic intellectual disability"/>
</dbReference>
<dbReference type="PharmGKB" id="PA162391595"/>
<dbReference type="VEuPathDB" id="HostDB:ENSG00000186603"/>
<dbReference type="eggNOG" id="KOG0638">
    <property type="taxonomic scope" value="Eukaryota"/>
</dbReference>
<dbReference type="GeneTree" id="ENSGT00530000063474"/>
<dbReference type="HOGENOM" id="CLU_034004_2_0_1"/>
<dbReference type="InParanoid" id="Q96IR7"/>
<dbReference type="OMA" id="PTLMRWF"/>
<dbReference type="OrthoDB" id="414569at2759"/>
<dbReference type="PAN-GO" id="Q96IR7">
    <property type="GO annotations" value="0 GO annotations based on evolutionary models"/>
</dbReference>
<dbReference type="PhylomeDB" id="Q96IR7"/>
<dbReference type="TreeFam" id="TF300622"/>
<dbReference type="PathwayCommons" id="Q96IR7"/>
<dbReference type="Reactome" id="R-HSA-2142789">
    <property type="pathway name" value="Ubiquinol biosynthesis"/>
</dbReference>
<dbReference type="SignaLink" id="Q96IR7"/>
<dbReference type="BioGRID-ORCS" id="84842">
    <property type="hits" value="16 hits in 1149 CRISPR screens"/>
</dbReference>
<dbReference type="GenomeRNAi" id="84842"/>
<dbReference type="Pharos" id="Q96IR7">
    <property type="development level" value="Tdark"/>
</dbReference>
<dbReference type="PRO" id="PR:Q96IR7"/>
<dbReference type="Proteomes" id="UP000005640">
    <property type="component" value="Chromosome 1"/>
</dbReference>
<dbReference type="RNAct" id="Q96IR7">
    <property type="molecule type" value="protein"/>
</dbReference>
<dbReference type="Bgee" id="ENSG00000186603">
    <property type="expression patterns" value="Expressed in primordial germ cell in gonad and 102 other cell types or tissues"/>
</dbReference>
<dbReference type="GO" id="GO:0005759">
    <property type="term" value="C:mitochondrial matrix"/>
    <property type="evidence" value="ECO:0000304"/>
    <property type="project" value="Reactome"/>
</dbReference>
<dbReference type="GO" id="GO:0005739">
    <property type="term" value="C:mitochondrion"/>
    <property type="evidence" value="ECO:0000314"/>
    <property type="project" value="UniProtKB"/>
</dbReference>
<dbReference type="GO" id="GO:0050585">
    <property type="term" value="F:4-hydroxymandelate synthase activity"/>
    <property type="evidence" value="ECO:0000315"/>
    <property type="project" value="UniProtKB"/>
</dbReference>
<dbReference type="GO" id="GO:0003868">
    <property type="term" value="F:4-hydroxyphenylpyruvate dioxygenase activity"/>
    <property type="evidence" value="ECO:0007669"/>
    <property type="project" value="InterPro"/>
</dbReference>
<dbReference type="GO" id="GO:0046872">
    <property type="term" value="F:metal ion binding"/>
    <property type="evidence" value="ECO:0007669"/>
    <property type="project" value="UniProtKB-KW"/>
</dbReference>
<dbReference type="GO" id="GO:0009072">
    <property type="term" value="P:aromatic amino acid metabolic process"/>
    <property type="evidence" value="ECO:0007669"/>
    <property type="project" value="InterPro"/>
</dbReference>
<dbReference type="CDD" id="cd07250">
    <property type="entry name" value="HPPD_C_like"/>
    <property type="match status" value="1"/>
</dbReference>
<dbReference type="CDD" id="cd08342">
    <property type="entry name" value="HPPD_N_like"/>
    <property type="match status" value="1"/>
</dbReference>
<dbReference type="Gene3D" id="3.10.180.10">
    <property type="entry name" value="2,3-Dihydroxybiphenyl 1,2-Dioxygenase, domain 1"/>
    <property type="match status" value="2"/>
</dbReference>
<dbReference type="InterPro" id="IPR005956">
    <property type="entry name" value="4OHPhenylPyrv_dOase"/>
</dbReference>
<dbReference type="InterPro" id="IPR041735">
    <property type="entry name" value="4OHPhenylPyrv_dOase_C"/>
</dbReference>
<dbReference type="InterPro" id="IPR041736">
    <property type="entry name" value="4OHPhenylPyrv_dOase_N"/>
</dbReference>
<dbReference type="InterPro" id="IPR029068">
    <property type="entry name" value="Glyas_Bleomycin-R_OHBP_Dase"/>
</dbReference>
<dbReference type="InterPro" id="IPR037523">
    <property type="entry name" value="VOC"/>
</dbReference>
<dbReference type="PANTHER" id="PTHR11959">
    <property type="entry name" value="4-HYDROXYPHENYLPYRUVATE DIOXYGENASE"/>
    <property type="match status" value="1"/>
</dbReference>
<dbReference type="PANTHER" id="PTHR11959:SF10">
    <property type="entry name" value="4-HYDROXYPHENYLPYRUVATE DIOXYGENASE-LIKE PROTEIN"/>
    <property type="match status" value="1"/>
</dbReference>
<dbReference type="PIRSF" id="PIRSF009283">
    <property type="entry name" value="HPP_dOase"/>
    <property type="match status" value="1"/>
</dbReference>
<dbReference type="SUPFAM" id="SSF54593">
    <property type="entry name" value="Glyoxalase/Bleomycin resistance protein/Dihydroxybiphenyl dioxygenase"/>
    <property type="match status" value="1"/>
</dbReference>
<dbReference type="PROSITE" id="PS51819">
    <property type="entry name" value="VOC"/>
    <property type="match status" value="2"/>
</dbReference>
<reference key="1">
    <citation type="journal article" date="2004" name="Nat. Genet.">
        <title>Complete sequencing and characterization of 21,243 full-length human cDNAs.</title>
        <authorList>
            <person name="Ota T."/>
            <person name="Suzuki Y."/>
            <person name="Nishikawa T."/>
            <person name="Otsuki T."/>
            <person name="Sugiyama T."/>
            <person name="Irie R."/>
            <person name="Wakamatsu A."/>
            <person name="Hayashi K."/>
            <person name="Sato H."/>
            <person name="Nagai K."/>
            <person name="Kimura K."/>
            <person name="Makita H."/>
            <person name="Sekine M."/>
            <person name="Obayashi M."/>
            <person name="Nishi T."/>
            <person name="Shibahara T."/>
            <person name="Tanaka T."/>
            <person name="Ishii S."/>
            <person name="Yamamoto J."/>
            <person name="Saito K."/>
            <person name="Kawai Y."/>
            <person name="Isono Y."/>
            <person name="Nakamura Y."/>
            <person name="Nagahari K."/>
            <person name="Murakami K."/>
            <person name="Yasuda T."/>
            <person name="Iwayanagi T."/>
            <person name="Wagatsuma M."/>
            <person name="Shiratori A."/>
            <person name="Sudo H."/>
            <person name="Hosoiri T."/>
            <person name="Kaku Y."/>
            <person name="Kodaira H."/>
            <person name="Kondo H."/>
            <person name="Sugawara M."/>
            <person name="Takahashi M."/>
            <person name="Kanda K."/>
            <person name="Yokoi T."/>
            <person name="Furuya T."/>
            <person name="Kikkawa E."/>
            <person name="Omura Y."/>
            <person name="Abe K."/>
            <person name="Kamihara K."/>
            <person name="Katsuta N."/>
            <person name="Sato K."/>
            <person name="Tanikawa M."/>
            <person name="Yamazaki M."/>
            <person name="Ninomiya K."/>
            <person name="Ishibashi T."/>
            <person name="Yamashita H."/>
            <person name="Murakawa K."/>
            <person name="Fujimori K."/>
            <person name="Tanai H."/>
            <person name="Kimata M."/>
            <person name="Watanabe M."/>
            <person name="Hiraoka S."/>
            <person name="Chiba Y."/>
            <person name="Ishida S."/>
            <person name="Ono Y."/>
            <person name="Takiguchi S."/>
            <person name="Watanabe S."/>
            <person name="Yosida M."/>
            <person name="Hotuta T."/>
            <person name="Kusano J."/>
            <person name="Kanehori K."/>
            <person name="Takahashi-Fujii A."/>
            <person name="Hara H."/>
            <person name="Tanase T.-O."/>
            <person name="Nomura Y."/>
            <person name="Togiya S."/>
            <person name="Komai F."/>
            <person name="Hara R."/>
            <person name="Takeuchi K."/>
            <person name="Arita M."/>
            <person name="Imose N."/>
            <person name="Musashino K."/>
            <person name="Yuuki H."/>
            <person name="Oshima A."/>
            <person name="Sasaki N."/>
            <person name="Aotsuka S."/>
            <person name="Yoshikawa Y."/>
            <person name="Matsunawa H."/>
            <person name="Ichihara T."/>
            <person name="Shiohata N."/>
            <person name="Sano S."/>
            <person name="Moriya S."/>
            <person name="Momiyama H."/>
            <person name="Satoh N."/>
            <person name="Takami S."/>
            <person name="Terashima Y."/>
            <person name="Suzuki O."/>
            <person name="Nakagawa S."/>
            <person name="Senoh A."/>
            <person name="Mizoguchi H."/>
            <person name="Goto Y."/>
            <person name="Shimizu F."/>
            <person name="Wakebe H."/>
            <person name="Hishigaki H."/>
            <person name="Watanabe T."/>
            <person name="Sugiyama A."/>
            <person name="Takemoto M."/>
            <person name="Kawakami B."/>
            <person name="Yamazaki M."/>
            <person name="Watanabe K."/>
            <person name="Kumagai A."/>
            <person name="Itakura S."/>
            <person name="Fukuzumi Y."/>
            <person name="Fujimori Y."/>
            <person name="Komiyama M."/>
            <person name="Tashiro H."/>
            <person name="Tanigami A."/>
            <person name="Fujiwara T."/>
            <person name="Ono T."/>
            <person name="Yamada K."/>
            <person name="Fujii Y."/>
            <person name="Ozaki K."/>
            <person name="Hirao M."/>
            <person name="Ohmori Y."/>
            <person name="Kawabata A."/>
            <person name="Hikiji T."/>
            <person name="Kobatake N."/>
            <person name="Inagaki H."/>
            <person name="Ikema Y."/>
            <person name="Okamoto S."/>
            <person name="Okitani R."/>
            <person name="Kawakami T."/>
            <person name="Noguchi S."/>
            <person name="Itoh T."/>
            <person name="Shigeta K."/>
            <person name="Senba T."/>
            <person name="Matsumura K."/>
            <person name="Nakajima Y."/>
            <person name="Mizuno T."/>
            <person name="Morinaga M."/>
            <person name="Sasaki M."/>
            <person name="Togashi T."/>
            <person name="Oyama M."/>
            <person name="Hata H."/>
            <person name="Watanabe M."/>
            <person name="Komatsu T."/>
            <person name="Mizushima-Sugano J."/>
            <person name="Satoh T."/>
            <person name="Shirai Y."/>
            <person name="Takahashi Y."/>
            <person name="Nakagawa K."/>
            <person name="Okumura K."/>
            <person name="Nagase T."/>
            <person name="Nomura N."/>
            <person name="Kikuchi H."/>
            <person name="Masuho Y."/>
            <person name="Yamashita R."/>
            <person name="Nakai K."/>
            <person name="Yada T."/>
            <person name="Nakamura Y."/>
            <person name="Ohara O."/>
            <person name="Isogai T."/>
            <person name="Sugano S."/>
        </authorList>
    </citation>
    <scope>NUCLEOTIDE SEQUENCE [LARGE SCALE MRNA]</scope>
</reference>
<reference key="2">
    <citation type="journal article" date="2006" name="Nature">
        <title>The DNA sequence and biological annotation of human chromosome 1.</title>
        <authorList>
            <person name="Gregory S.G."/>
            <person name="Barlow K.F."/>
            <person name="McLay K.E."/>
            <person name="Kaul R."/>
            <person name="Swarbreck D."/>
            <person name="Dunham A."/>
            <person name="Scott C.E."/>
            <person name="Howe K.L."/>
            <person name="Woodfine K."/>
            <person name="Spencer C.C.A."/>
            <person name="Jones M.C."/>
            <person name="Gillson C."/>
            <person name="Searle S."/>
            <person name="Zhou Y."/>
            <person name="Kokocinski F."/>
            <person name="McDonald L."/>
            <person name="Evans R."/>
            <person name="Phillips K."/>
            <person name="Atkinson A."/>
            <person name="Cooper R."/>
            <person name="Jones C."/>
            <person name="Hall R.E."/>
            <person name="Andrews T.D."/>
            <person name="Lloyd C."/>
            <person name="Ainscough R."/>
            <person name="Almeida J.P."/>
            <person name="Ambrose K.D."/>
            <person name="Anderson F."/>
            <person name="Andrew R.W."/>
            <person name="Ashwell R.I.S."/>
            <person name="Aubin K."/>
            <person name="Babbage A.K."/>
            <person name="Bagguley C.L."/>
            <person name="Bailey J."/>
            <person name="Beasley H."/>
            <person name="Bethel G."/>
            <person name="Bird C.P."/>
            <person name="Bray-Allen S."/>
            <person name="Brown J.Y."/>
            <person name="Brown A.J."/>
            <person name="Buckley D."/>
            <person name="Burton J."/>
            <person name="Bye J."/>
            <person name="Carder C."/>
            <person name="Chapman J.C."/>
            <person name="Clark S.Y."/>
            <person name="Clarke G."/>
            <person name="Clee C."/>
            <person name="Cobley V."/>
            <person name="Collier R.E."/>
            <person name="Corby N."/>
            <person name="Coville G.J."/>
            <person name="Davies J."/>
            <person name="Deadman R."/>
            <person name="Dunn M."/>
            <person name="Earthrowl M."/>
            <person name="Ellington A.G."/>
            <person name="Errington H."/>
            <person name="Frankish A."/>
            <person name="Frankland J."/>
            <person name="French L."/>
            <person name="Garner P."/>
            <person name="Garnett J."/>
            <person name="Gay L."/>
            <person name="Ghori M.R.J."/>
            <person name="Gibson R."/>
            <person name="Gilby L.M."/>
            <person name="Gillett W."/>
            <person name="Glithero R.J."/>
            <person name="Grafham D.V."/>
            <person name="Griffiths C."/>
            <person name="Griffiths-Jones S."/>
            <person name="Grocock R."/>
            <person name="Hammond S."/>
            <person name="Harrison E.S.I."/>
            <person name="Hart E."/>
            <person name="Haugen E."/>
            <person name="Heath P.D."/>
            <person name="Holmes S."/>
            <person name="Holt K."/>
            <person name="Howden P.J."/>
            <person name="Hunt A.R."/>
            <person name="Hunt S.E."/>
            <person name="Hunter G."/>
            <person name="Isherwood J."/>
            <person name="James R."/>
            <person name="Johnson C."/>
            <person name="Johnson D."/>
            <person name="Joy A."/>
            <person name="Kay M."/>
            <person name="Kershaw J.K."/>
            <person name="Kibukawa M."/>
            <person name="Kimberley A.M."/>
            <person name="King A."/>
            <person name="Knights A.J."/>
            <person name="Lad H."/>
            <person name="Laird G."/>
            <person name="Lawlor S."/>
            <person name="Leongamornlert D.A."/>
            <person name="Lloyd D.M."/>
            <person name="Loveland J."/>
            <person name="Lovell J."/>
            <person name="Lush M.J."/>
            <person name="Lyne R."/>
            <person name="Martin S."/>
            <person name="Mashreghi-Mohammadi M."/>
            <person name="Matthews L."/>
            <person name="Matthews N.S.W."/>
            <person name="McLaren S."/>
            <person name="Milne S."/>
            <person name="Mistry S."/>
            <person name="Moore M.J.F."/>
            <person name="Nickerson T."/>
            <person name="O'Dell C.N."/>
            <person name="Oliver K."/>
            <person name="Palmeiri A."/>
            <person name="Palmer S.A."/>
            <person name="Parker A."/>
            <person name="Patel D."/>
            <person name="Pearce A.V."/>
            <person name="Peck A.I."/>
            <person name="Pelan S."/>
            <person name="Phelps K."/>
            <person name="Phillimore B.J."/>
            <person name="Plumb R."/>
            <person name="Rajan J."/>
            <person name="Raymond C."/>
            <person name="Rouse G."/>
            <person name="Saenphimmachak C."/>
            <person name="Sehra H.K."/>
            <person name="Sheridan E."/>
            <person name="Shownkeen R."/>
            <person name="Sims S."/>
            <person name="Skuce C.D."/>
            <person name="Smith M."/>
            <person name="Steward C."/>
            <person name="Subramanian S."/>
            <person name="Sycamore N."/>
            <person name="Tracey A."/>
            <person name="Tromans A."/>
            <person name="Van Helmond Z."/>
            <person name="Wall M."/>
            <person name="Wallis J.M."/>
            <person name="White S."/>
            <person name="Whitehead S.L."/>
            <person name="Wilkinson J.E."/>
            <person name="Willey D.L."/>
            <person name="Williams H."/>
            <person name="Wilming L."/>
            <person name="Wray P.W."/>
            <person name="Wu Z."/>
            <person name="Coulson A."/>
            <person name="Vaudin M."/>
            <person name="Sulston J.E."/>
            <person name="Durbin R.M."/>
            <person name="Hubbard T."/>
            <person name="Wooster R."/>
            <person name="Dunham I."/>
            <person name="Carter N.P."/>
            <person name="McVean G."/>
            <person name="Ross M.T."/>
            <person name="Harrow J."/>
            <person name="Olson M.V."/>
            <person name="Beck S."/>
            <person name="Rogers J."/>
            <person name="Bentley D.R."/>
        </authorList>
    </citation>
    <scope>NUCLEOTIDE SEQUENCE [LARGE SCALE GENOMIC DNA]</scope>
</reference>
<reference key="3">
    <citation type="submission" date="2005-09" db="EMBL/GenBank/DDBJ databases">
        <authorList>
            <person name="Mural R.J."/>
            <person name="Istrail S."/>
            <person name="Sutton G.G."/>
            <person name="Florea L."/>
            <person name="Halpern A.L."/>
            <person name="Mobarry C.M."/>
            <person name="Lippert R."/>
            <person name="Walenz B."/>
            <person name="Shatkay H."/>
            <person name="Dew I."/>
            <person name="Miller J.R."/>
            <person name="Flanigan M.J."/>
            <person name="Edwards N.J."/>
            <person name="Bolanos R."/>
            <person name="Fasulo D."/>
            <person name="Halldorsson B.V."/>
            <person name="Hannenhalli S."/>
            <person name="Turner R."/>
            <person name="Yooseph S."/>
            <person name="Lu F."/>
            <person name="Nusskern D.R."/>
            <person name="Shue B.C."/>
            <person name="Zheng X.H."/>
            <person name="Zhong F."/>
            <person name="Delcher A.L."/>
            <person name="Huson D.H."/>
            <person name="Kravitz S.A."/>
            <person name="Mouchard L."/>
            <person name="Reinert K."/>
            <person name="Remington K.A."/>
            <person name="Clark A.G."/>
            <person name="Waterman M.S."/>
            <person name="Eichler E.E."/>
            <person name="Adams M.D."/>
            <person name="Hunkapiller M.W."/>
            <person name="Myers E.W."/>
            <person name="Venter J.C."/>
        </authorList>
    </citation>
    <scope>NUCLEOTIDE SEQUENCE [LARGE SCALE GENOMIC DNA]</scope>
</reference>
<reference key="4">
    <citation type="journal article" date="2004" name="Genome Res.">
        <title>The status, quality, and expansion of the NIH full-length cDNA project: the Mammalian Gene Collection (MGC).</title>
        <authorList>
            <consortium name="The MGC Project Team"/>
        </authorList>
    </citation>
    <scope>NUCLEOTIDE SEQUENCE [LARGE SCALE MRNA]</scope>
    <source>
        <tissue>Colon</tissue>
    </source>
</reference>
<reference key="5">
    <citation type="journal article" date="2011" name="BMC Syst. Biol.">
        <title>Initial characterization of the human central proteome.</title>
        <authorList>
            <person name="Burkard T.R."/>
            <person name="Planyavsky M."/>
            <person name="Kaupe I."/>
            <person name="Breitwieser F.P."/>
            <person name="Buerckstuemmer T."/>
            <person name="Bennett K.L."/>
            <person name="Superti-Furga G."/>
            <person name="Colinge J."/>
        </authorList>
    </citation>
    <scope>IDENTIFICATION BY MASS SPECTROMETRY [LARGE SCALE ANALYSIS]</scope>
</reference>
<reference key="6">
    <citation type="journal article" date="2021" name="Nature">
        <title>The polar oxy-metabolome reveals the 4-hydroxymandelate CoQ10 synthesis pathway.</title>
        <authorList>
            <person name="Banh R.S."/>
            <person name="Kim E.S."/>
            <person name="Spillier Q."/>
            <person name="Biancur D.E."/>
            <person name="Yamamoto K."/>
            <person name="Sohn A.S.W."/>
            <person name="Shi G."/>
            <person name="Jones D.R."/>
            <person name="Kimmelman A.C."/>
            <person name="Pacold M.E."/>
        </authorList>
    </citation>
    <scope>FUNCTION</scope>
    <scope>CATALYTIC ACTIVITY</scope>
    <scope>SUBCELLULAR LOCATION</scope>
    <scope>MUTAGENESIS OF HIS-258</scope>
</reference>
<reference key="7">
    <citation type="journal article" date="2020" name="Am. J. Hum. Genet.">
        <title>Bi-allelic HPDL Variants Cause a Neurodegenerative Disease Ranging from Neonatal Encephalopathy to Adolescent-Onset Spastic Paraplegia.</title>
        <authorList>
            <person name="Husain R.A."/>
            <person name="Grimmel M."/>
            <person name="Wagner M."/>
            <person name="Hennings J.C."/>
            <person name="Marx C."/>
            <person name="Feichtinger R.G."/>
            <person name="Saadi A."/>
            <person name="Rostasy K."/>
            <person name="Radelfahr F."/>
            <person name="Bevot A."/>
            <person name="Doebler-Neumann M."/>
            <person name="Hartmann H."/>
            <person name="Colleaux L."/>
            <person name="Cordts I."/>
            <person name="Kobeleva X."/>
            <person name="Darvish H."/>
            <person name="Bakhtiari S."/>
            <person name="Kruer M.C."/>
            <person name="Besse A."/>
            <person name="Ng A.C."/>
            <person name="Chiang D."/>
            <person name="Bolduc F."/>
            <person name="Tafakhori A."/>
            <person name="Mane S."/>
            <person name="Ghasemi Firouzabadi S."/>
            <person name="Huebner A.K."/>
            <person name="Buchert R."/>
            <person name="Beck-Woedl S."/>
            <person name="Mueller A.J."/>
            <person name="Laugwitz L."/>
            <person name="Naegele T."/>
            <person name="Wang Z.Q."/>
            <person name="Strom T.M."/>
            <person name="Sturm M."/>
            <person name="Meitinger T."/>
            <person name="Klockgether T."/>
            <person name="Riess O."/>
            <person name="Klopstock T."/>
            <person name="Brandl U."/>
            <person name="Huebner C.A."/>
            <person name="Deschauer M."/>
            <person name="Mayr J.A."/>
            <person name="Bonnen P.E."/>
            <person name="Kraegeloh-Mann I."/>
            <person name="Wortmann S.B."/>
            <person name="Haack T.B."/>
        </authorList>
    </citation>
    <scope>INVOLVEMENT IN SPG83</scope>
    <scope>INVOLVEMENT IN NEDSWMA</scope>
    <scope>VARIANTS SPG83 ASP-50 AND HIS-287</scope>
    <scope>VARIANTS NEDSWMA ARG-157; TYR-168; CYS-179; PRO-217; PRO-234; 241-GLN--ALA-371 DEL; PRO-248; GLN-251; GLU-260; THR-266 AND 342-GLN--ALA-371 DEL</scope>
    <scope>CHARACTERIZATION OF VARIANTS NEDSWMA ARG-157; TYR-168; CYS-179 AND 342-GLN--ALA-371 DEL</scope>
    <scope>SUBCELLULAR LOCATION</scope>
</reference>
<reference key="8">
    <citation type="journal article" date="2021" name="Brain Commun.">
        <title>Evidence that autosomal recessive spastic cerebral palsy-1 (CPSQ1) is caused by a missense variant in HPDL.</title>
        <authorList>
            <person name="Morgan N.V."/>
            <person name="Yngvadottir B."/>
            <person name="O'Driscoll M."/>
            <person name="Clark G.R."/>
            <person name="Walsh D."/>
            <person name="Martin E."/>
            <person name="Tee L."/>
            <person name="Reid E."/>
            <person name="Titheradge H.L."/>
            <person name="Maher E.R."/>
        </authorList>
    </citation>
    <scope>VARIANT NEDSWMA PRO-176</scope>
</reference>
<sequence length="371" mass="39386">MAAPALRLCHIAFHVPAGQPLARNLQRLFGFQPLASREVDGWRQLALRSGDAVFLVNEGAGSGEPLYGLDPRHAVPSATNLCFDVADAGAATRELAALGCSVPVPPVRVRDAQGAATYAVVSSPAGILSLTLLERAGYRGPFLPGFRPVSSAPGPGWVSRVDHLTLACTPGSSPTLLRWFHDCLGFCHLPLSPGEDPELGLEMTAGFGLGGLRLTALQAQPGSIVPTLVLAESLPGATTRQDQVEQFLARHKGPGLQHVGLYTPNIVEATEGVATAGGQFLAPPGAYYQQPGKERQIRAAGHEPHLLARQGILLDGDKGKFLLQVFTKSLFTEDTFFLELIQRQGATGFGQGNIRALWQSVQEQSARSQEA</sequence>
<name>HPDL_HUMAN</name>
<evidence type="ECO:0000250" key="1">
    <source>
        <dbReference type="UniProtKB" id="O52791"/>
    </source>
</evidence>
<evidence type="ECO:0000255" key="2">
    <source>
        <dbReference type="PROSITE-ProRule" id="PRU01163"/>
    </source>
</evidence>
<evidence type="ECO:0000269" key="3">
    <source>
    </source>
</evidence>
<evidence type="ECO:0000269" key="4">
    <source>
    </source>
</evidence>
<evidence type="ECO:0000269" key="5">
    <source>
    </source>
</evidence>
<evidence type="ECO:0000303" key="6">
    <source>
    </source>
</evidence>
<evidence type="ECO:0000305" key="7"/>
<evidence type="ECO:0000312" key="8">
    <source>
        <dbReference type="HGNC" id="HGNC:28242"/>
    </source>
</evidence>